<gene>
    <name evidence="3" type="primary">SLC39A9</name>
    <name type="synonym">ZIP9</name>
    <name type="ORF">QtsA-14752</name>
</gene>
<name>S39A9_MACFA</name>
<evidence type="ECO:0000250" key="1">
    <source>
        <dbReference type="UniProtKB" id="Q3KR82"/>
    </source>
</evidence>
<evidence type="ECO:0000250" key="2">
    <source>
        <dbReference type="UniProtKB" id="Q8BFU1"/>
    </source>
</evidence>
<evidence type="ECO:0000250" key="3">
    <source>
        <dbReference type="UniProtKB" id="Q9NUM3"/>
    </source>
</evidence>
<evidence type="ECO:0000255" key="4"/>
<evidence type="ECO:0000305" key="5"/>
<reference key="1">
    <citation type="journal article" date="2002" name="BMC Genomics">
        <title>Cynomolgus monkey testicular cDNAs for discovery of novel human genes in the human genome sequence.</title>
        <authorList>
            <person name="Osada N."/>
            <person name="Hida M."/>
            <person name="Kusuda J."/>
            <person name="Tanuma R."/>
            <person name="Hirata M."/>
            <person name="Suto Y."/>
            <person name="Hirai M."/>
            <person name="Terao K."/>
            <person name="Sugano S."/>
            <person name="Hashimoto K."/>
        </authorList>
    </citation>
    <scope>NUCLEOTIDE SEQUENCE [LARGE SCALE MRNA]</scope>
    <source>
        <tissue>Testis</tissue>
    </source>
</reference>
<protein>
    <recommendedName>
        <fullName evidence="3">Zinc transporter ZIP9</fullName>
    </recommendedName>
    <alternativeName>
        <fullName>Solute carrier family 39 member 9</fullName>
    </alternativeName>
    <alternativeName>
        <fullName>Zrt- and Irt-like protein 9</fullName>
        <shortName>ZIP-9</shortName>
    </alternativeName>
</protein>
<comment type="function">
    <text evidence="1 2 3">Transports zinc ions across cell and organelle membranes into the cytoplasm and regulates intracellular zinc homeostasis. Participates in the zinc ions efflux out of the secretory compartments. Regulates intracellular zinc level, resulting in the enhancement of AKT1 and MAPK3/MAPK1 (Erk1/2) phosphorylation in response to the BCR activation (By similarity). Also functions as a membrane androgen receptor that mediates, through a G protein, the non-classical androgen signaling pathway, characterized by the activation of MAPK3/MAPK1 (Erk1/2) and transcription factors CREB1 or ATF1 (By similarity). This pathway contributes to CLDN1 and CLDN5 expression and tight junction formation between adjacent Sertoli cells (By similarity). Mediates androgen-induced vascular endothelial cell proliferation through activation of an inhibitory G protein leading to the AKT1 and MAPK3/MAPK1 (Erk1/2) activation which in turn modulate inhibition (phosphorylation) of GSK3B and CCND1 transcription. Moreover, has dual functions as a membrane-bound androgen receptor and as an androgen-dependent zinc transporter both of which are mediated through an inhibitory G protein (Gi) that mediates both MAP kinase and zinc signaling leading to the androgen-dependent apoptotic process (By similarity).</text>
</comment>
<comment type="catalytic activity">
    <reaction evidence="3">
        <text>Zn(2+)(in) = Zn(2+)(out)</text>
        <dbReference type="Rhea" id="RHEA:29351"/>
        <dbReference type="ChEBI" id="CHEBI:29105"/>
    </reaction>
</comment>
<comment type="subcellular location">
    <subcellularLocation>
        <location evidence="3">Golgi apparatus</location>
        <location evidence="3">trans-Golgi network membrane</location>
    </subcellularLocation>
    <subcellularLocation>
        <location evidence="3">Cell membrane</location>
        <topology evidence="3">Multi-pass membrane protein</topology>
    </subcellularLocation>
    <subcellularLocation>
        <location evidence="3">Cytoplasm</location>
        <location evidence="3">Perinuclear region</location>
    </subcellularLocation>
    <subcellularLocation>
        <location evidence="3">Mitochondrion</location>
    </subcellularLocation>
    <subcellularLocation>
        <location evidence="3">Nucleus</location>
    </subcellularLocation>
</comment>
<comment type="similarity">
    <text evidence="5">Belongs to the ZIP transporter (TC 2.A.5) family.</text>
</comment>
<keyword id="KW-1003">Cell membrane</keyword>
<keyword id="KW-0963">Cytoplasm</keyword>
<keyword id="KW-0325">Glycoprotein</keyword>
<keyword id="KW-0333">Golgi apparatus</keyword>
<keyword id="KW-0406">Ion transport</keyword>
<keyword id="KW-0472">Membrane</keyword>
<keyword id="KW-0496">Mitochondrion</keyword>
<keyword id="KW-0539">Nucleus</keyword>
<keyword id="KW-1185">Reference proteome</keyword>
<keyword id="KW-0812">Transmembrane</keyword>
<keyword id="KW-1133">Transmembrane helix</keyword>
<keyword id="KW-0813">Transport</keyword>
<keyword id="KW-0862">Zinc</keyword>
<keyword id="KW-0864">Zinc transport</keyword>
<sequence length="235" mass="24993">MNMSTATTTHSCVPILVFPSYWASFSCCWWTRLVTPMCILLTPTQCEDDEDENLYDDPLLLNNPEAARSSNSKTTTTLGLVVHAAADGVALGAAASTSQTSVQLIVFVAIMLHKAPAAFGLVSFLMHAGLERNRIRKHLLVFSLAAPVMSMVTYLGLSKSSKEALSEVNATGMAMLFSAGTFLYVATVHVLPEVGGIGHSHKPDATGGRGLSRLEVAALVLGCLIPLILSVGHQH</sequence>
<feature type="chain" id="PRO_0000297598" description="Zinc transporter ZIP9">
    <location>
        <begin position="1"/>
        <end position="235"/>
    </location>
</feature>
<feature type="transmembrane region" description="Helical" evidence="4">
    <location>
        <begin position="11"/>
        <end position="31"/>
    </location>
</feature>
<feature type="transmembrane region" description="Helical" evidence="4">
    <location>
        <begin position="75"/>
        <end position="95"/>
    </location>
</feature>
<feature type="transmembrane region" description="Helical" evidence="4">
    <location>
        <begin position="104"/>
        <end position="124"/>
    </location>
</feature>
<feature type="transmembrane region" description="Helical" evidence="4">
    <location>
        <begin position="138"/>
        <end position="158"/>
    </location>
</feature>
<feature type="transmembrane region" description="Helical" evidence="4">
    <location>
        <begin position="172"/>
        <end position="192"/>
    </location>
</feature>
<feature type="transmembrane region" description="Helical" evidence="4">
    <location>
        <begin position="214"/>
        <end position="234"/>
    </location>
</feature>
<feature type="glycosylation site" description="N-linked (GlcNAc...) asparagine" evidence="4">
    <location>
        <position position="2"/>
    </location>
</feature>
<feature type="glycosylation site" description="N-linked (GlcNAc...) asparagine" evidence="4">
    <location>
        <position position="169"/>
    </location>
</feature>
<dbReference type="EMBL" id="AB070136">
    <property type="protein sequence ID" value="BAB63081.1"/>
    <property type="molecule type" value="mRNA"/>
</dbReference>
<dbReference type="SMR" id="Q95JP5"/>
<dbReference type="STRING" id="9541.ENSMFAP00000015024"/>
<dbReference type="GlyCosmos" id="Q95JP5">
    <property type="glycosylation" value="2 sites, No reported glycans"/>
</dbReference>
<dbReference type="eggNOG" id="KOG3907">
    <property type="taxonomic scope" value="Eukaryota"/>
</dbReference>
<dbReference type="Proteomes" id="UP000233100">
    <property type="component" value="Unplaced"/>
</dbReference>
<dbReference type="GO" id="GO:0031966">
    <property type="term" value="C:mitochondrial membrane"/>
    <property type="evidence" value="ECO:0000250"/>
    <property type="project" value="UniProtKB"/>
</dbReference>
<dbReference type="GO" id="GO:0005739">
    <property type="term" value="C:mitochondrion"/>
    <property type="evidence" value="ECO:0000250"/>
    <property type="project" value="UniProtKB"/>
</dbReference>
<dbReference type="GO" id="GO:0005634">
    <property type="term" value="C:nucleus"/>
    <property type="evidence" value="ECO:0000250"/>
    <property type="project" value="UniProtKB"/>
</dbReference>
<dbReference type="GO" id="GO:0048471">
    <property type="term" value="C:perinuclear region of cytoplasm"/>
    <property type="evidence" value="ECO:0000250"/>
    <property type="project" value="UniProtKB"/>
</dbReference>
<dbReference type="GO" id="GO:0005886">
    <property type="term" value="C:plasma membrane"/>
    <property type="evidence" value="ECO:0000250"/>
    <property type="project" value="UniProtKB"/>
</dbReference>
<dbReference type="GO" id="GO:0005802">
    <property type="term" value="C:trans-Golgi network"/>
    <property type="evidence" value="ECO:0000250"/>
    <property type="project" value="UniProtKB"/>
</dbReference>
<dbReference type="GO" id="GO:0005497">
    <property type="term" value="F:androgen binding"/>
    <property type="evidence" value="ECO:0000250"/>
    <property type="project" value="UniProtKB"/>
</dbReference>
<dbReference type="GO" id="GO:0004930">
    <property type="term" value="F:G protein-coupled receptor activity"/>
    <property type="evidence" value="ECO:0000250"/>
    <property type="project" value="UniProtKB"/>
</dbReference>
<dbReference type="GO" id="GO:0022883">
    <property type="term" value="F:zinc efflux transmembrane transporter activity"/>
    <property type="evidence" value="ECO:0000250"/>
    <property type="project" value="UniProtKB"/>
</dbReference>
<dbReference type="GO" id="GO:0005385">
    <property type="term" value="F:zinc ion transmembrane transporter activity"/>
    <property type="evidence" value="ECO:0000250"/>
    <property type="project" value="UniProtKB"/>
</dbReference>
<dbReference type="GO" id="GO:0070830">
    <property type="term" value="P:bicellular tight junction assembly"/>
    <property type="evidence" value="ECO:0000250"/>
    <property type="project" value="UniProtKB"/>
</dbReference>
<dbReference type="GO" id="GO:0006882">
    <property type="term" value="P:intracellular zinc ion homeostasis"/>
    <property type="evidence" value="ECO:0000250"/>
    <property type="project" value="UniProtKB"/>
</dbReference>
<dbReference type="GO" id="GO:2000654">
    <property type="term" value="P:regulation of cellular response to testosterone stimulus"/>
    <property type="evidence" value="ECO:0000250"/>
    <property type="project" value="UniProtKB"/>
</dbReference>
<dbReference type="GO" id="GO:1905562">
    <property type="term" value="P:regulation of vascular endothelial cell proliferation"/>
    <property type="evidence" value="ECO:0000250"/>
    <property type="project" value="UniProtKB"/>
</dbReference>
<dbReference type="GO" id="GO:0071577">
    <property type="term" value="P:zinc ion transmembrane transport"/>
    <property type="evidence" value="ECO:0000250"/>
    <property type="project" value="UniProtKB"/>
</dbReference>
<dbReference type="InterPro" id="IPR003689">
    <property type="entry name" value="ZIP"/>
</dbReference>
<dbReference type="InterPro" id="IPR045891">
    <property type="entry name" value="ZIP9"/>
</dbReference>
<dbReference type="PANTHER" id="PTHR16133">
    <property type="entry name" value="SOLUTE CARRIER FAMILY 39 ZINC TRANSPORTER , MEMBER 9-RELATED"/>
    <property type="match status" value="1"/>
</dbReference>
<dbReference type="PANTHER" id="PTHR16133:SF5">
    <property type="entry name" value="ZINC TRANSPORTER ZIP9"/>
    <property type="match status" value="1"/>
</dbReference>
<dbReference type="Pfam" id="PF02535">
    <property type="entry name" value="Zip"/>
    <property type="match status" value="1"/>
</dbReference>
<proteinExistence type="evidence at transcript level"/>
<organism>
    <name type="scientific">Macaca fascicularis</name>
    <name type="common">Crab-eating macaque</name>
    <name type="synonym">Cynomolgus monkey</name>
    <dbReference type="NCBI Taxonomy" id="9541"/>
    <lineage>
        <taxon>Eukaryota</taxon>
        <taxon>Metazoa</taxon>
        <taxon>Chordata</taxon>
        <taxon>Craniata</taxon>
        <taxon>Vertebrata</taxon>
        <taxon>Euteleostomi</taxon>
        <taxon>Mammalia</taxon>
        <taxon>Eutheria</taxon>
        <taxon>Euarchontoglires</taxon>
        <taxon>Primates</taxon>
        <taxon>Haplorrhini</taxon>
        <taxon>Catarrhini</taxon>
        <taxon>Cercopithecidae</taxon>
        <taxon>Cercopithecinae</taxon>
        <taxon>Macaca</taxon>
    </lineage>
</organism>
<accession>Q95JP5</accession>